<feature type="initiator methionine" description="Removed" evidence="1">
    <location>
        <position position="1"/>
    </location>
</feature>
<feature type="chain" id="PRO_0000228436" description="Formamidopyrimidine-DNA glycosylase">
    <location>
        <begin position="2"/>
        <end position="271"/>
    </location>
</feature>
<feature type="zinc finger region" description="FPG-type" evidence="2">
    <location>
        <begin position="237"/>
        <end position="271"/>
    </location>
</feature>
<feature type="active site" description="Schiff-base intermediate with DNA" evidence="2">
    <location>
        <position position="2"/>
    </location>
</feature>
<feature type="active site" description="Proton donor" evidence="2">
    <location>
        <position position="3"/>
    </location>
</feature>
<feature type="active site" description="Proton donor; for beta-elimination activity" evidence="2">
    <location>
        <position position="58"/>
    </location>
</feature>
<feature type="active site" description="Proton donor; for delta-elimination activity" evidence="2">
    <location>
        <position position="261"/>
    </location>
</feature>
<feature type="binding site" evidence="2">
    <location>
        <position position="110"/>
    </location>
    <ligand>
        <name>DNA</name>
        <dbReference type="ChEBI" id="CHEBI:16991"/>
    </ligand>
</feature>
<feature type="binding site" evidence="2">
    <location>
        <position position="152"/>
    </location>
    <ligand>
        <name>DNA</name>
        <dbReference type="ChEBI" id="CHEBI:16991"/>
    </ligand>
</feature>
<proteinExistence type="inferred from homology"/>
<protein>
    <recommendedName>
        <fullName evidence="2">Formamidopyrimidine-DNA glycosylase</fullName>
        <shortName evidence="2">Fapy-DNA glycosylase</shortName>
        <ecNumber evidence="2">3.2.2.23</ecNumber>
    </recommendedName>
    <alternativeName>
        <fullName evidence="2">DNA-(apurinic or apyrimidinic site) lyase MutM</fullName>
        <shortName evidence="2">AP lyase MutM</shortName>
        <ecNumber evidence="2">4.2.99.18</ecNumber>
    </alternativeName>
</protein>
<dbReference type="EC" id="3.2.2.23" evidence="2"/>
<dbReference type="EC" id="4.2.99.18" evidence="2"/>
<dbReference type="EMBL" id="AE017180">
    <property type="protein sequence ID" value="AAR34324.1"/>
    <property type="molecule type" value="Genomic_DNA"/>
</dbReference>
<dbReference type="RefSeq" id="NP_952051.1">
    <property type="nucleotide sequence ID" value="NC_002939.5"/>
</dbReference>
<dbReference type="RefSeq" id="WP_010941662.1">
    <property type="nucleotide sequence ID" value="NC_002939.5"/>
</dbReference>
<dbReference type="SMR" id="Q74EG5"/>
<dbReference type="FunCoup" id="Q74EG5">
    <property type="interactions" value="485"/>
</dbReference>
<dbReference type="STRING" id="243231.GSU0997"/>
<dbReference type="EnsemblBacteria" id="AAR34324">
    <property type="protein sequence ID" value="AAR34324"/>
    <property type="gene ID" value="GSU0997"/>
</dbReference>
<dbReference type="KEGG" id="gsu:GSU0997"/>
<dbReference type="PATRIC" id="fig|243231.5.peg.997"/>
<dbReference type="eggNOG" id="COG0266">
    <property type="taxonomic scope" value="Bacteria"/>
</dbReference>
<dbReference type="HOGENOM" id="CLU_038423_1_1_7"/>
<dbReference type="InParanoid" id="Q74EG5"/>
<dbReference type="OrthoDB" id="9800855at2"/>
<dbReference type="Proteomes" id="UP000000577">
    <property type="component" value="Chromosome"/>
</dbReference>
<dbReference type="GO" id="GO:0034039">
    <property type="term" value="F:8-oxo-7,8-dihydroguanine DNA N-glycosylase activity"/>
    <property type="evidence" value="ECO:0000318"/>
    <property type="project" value="GO_Central"/>
</dbReference>
<dbReference type="GO" id="GO:0140078">
    <property type="term" value="F:class I DNA-(apurinic or apyrimidinic site) endonuclease activity"/>
    <property type="evidence" value="ECO:0007669"/>
    <property type="project" value="UniProtKB-EC"/>
</dbReference>
<dbReference type="GO" id="GO:0003684">
    <property type="term" value="F:damaged DNA binding"/>
    <property type="evidence" value="ECO:0007669"/>
    <property type="project" value="InterPro"/>
</dbReference>
<dbReference type="GO" id="GO:0003906">
    <property type="term" value="F:DNA-(apurinic or apyrimidinic site) endonuclease activity"/>
    <property type="evidence" value="ECO:0000318"/>
    <property type="project" value="GO_Central"/>
</dbReference>
<dbReference type="GO" id="GO:0008270">
    <property type="term" value="F:zinc ion binding"/>
    <property type="evidence" value="ECO:0007669"/>
    <property type="project" value="UniProtKB-UniRule"/>
</dbReference>
<dbReference type="GO" id="GO:0006284">
    <property type="term" value="P:base-excision repair"/>
    <property type="evidence" value="ECO:0000318"/>
    <property type="project" value="GO_Central"/>
</dbReference>
<dbReference type="CDD" id="cd08966">
    <property type="entry name" value="EcFpg-like_N"/>
    <property type="match status" value="1"/>
</dbReference>
<dbReference type="FunFam" id="1.10.8.50:FF:000003">
    <property type="entry name" value="Formamidopyrimidine-DNA glycosylase"/>
    <property type="match status" value="1"/>
</dbReference>
<dbReference type="FunFam" id="3.20.190.10:FF:000001">
    <property type="entry name" value="Formamidopyrimidine-DNA glycosylase"/>
    <property type="match status" value="1"/>
</dbReference>
<dbReference type="Gene3D" id="1.10.8.50">
    <property type="match status" value="1"/>
</dbReference>
<dbReference type="Gene3D" id="3.20.190.10">
    <property type="entry name" value="MutM-like, N-terminal"/>
    <property type="match status" value="1"/>
</dbReference>
<dbReference type="HAMAP" id="MF_00103">
    <property type="entry name" value="Fapy_DNA_glycosyl"/>
    <property type="match status" value="1"/>
</dbReference>
<dbReference type="InterPro" id="IPR015886">
    <property type="entry name" value="DNA_glyclase/AP_lyase_DNA-bd"/>
</dbReference>
<dbReference type="InterPro" id="IPR015887">
    <property type="entry name" value="DNA_glyclase_Znf_dom_DNA_BS"/>
</dbReference>
<dbReference type="InterPro" id="IPR020629">
    <property type="entry name" value="Formamido-pyr_DNA_Glyclase"/>
</dbReference>
<dbReference type="InterPro" id="IPR012319">
    <property type="entry name" value="FPG_cat"/>
</dbReference>
<dbReference type="InterPro" id="IPR035937">
    <property type="entry name" value="MutM-like_N-ter"/>
</dbReference>
<dbReference type="InterPro" id="IPR010979">
    <property type="entry name" value="Ribosomal_uS13-like_H2TH"/>
</dbReference>
<dbReference type="InterPro" id="IPR000214">
    <property type="entry name" value="Znf_DNA_glyclase/AP_lyase"/>
</dbReference>
<dbReference type="InterPro" id="IPR010663">
    <property type="entry name" value="Znf_FPG/IleRS"/>
</dbReference>
<dbReference type="NCBIfam" id="TIGR00577">
    <property type="entry name" value="fpg"/>
    <property type="match status" value="1"/>
</dbReference>
<dbReference type="NCBIfam" id="NF002211">
    <property type="entry name" value="PRK01103.1"/>
    <property type="match status" value="1"/>
</dbReference>
<dbReference type="PANTHER" id="PTHR22993">
    <property type="entry name" value="FORMAMIDOPYRIMIDINE-DNA GLYCOSYLASE"/>
    <property type="match status" value="1"/>
</dbReference>
<dbReference type="PANTHER" id="PTHR22993:SF9">
    <property type="entry name" value="FORMAMIDOPYRIMIDINE-DNA GLYCOSYLASE"/>
    <property type="match status" value="1"/>
</dbReference>
<dbReference type="Pfam" id="PF01149">
    <property type="entry name" value="Fapy_DNA_glyco"/>
    <property type="match status" value="1"/>
</dbReference>
<dbReference type="Pfam" id="PF06831">
    <property type="entry name" value="H2TH"/>
    <property type="match status" value="1"/>
</dbReference>
<dbReference type="Pfam" id="PF06827">
    <property type="entry name" value="zf-FPG_IleRS"/>
    <property type="match status" value="1"/>
</dbReference>
<dbReference type="SMART" id="SM00898">
    <property type="entry name" value="Fapy_DNA_glyco"/>
    <property type="match status" value="1"/>
</dbReference>
<dbReference type="SMART" id="SM01232">
    <property type="entry name" value="H2TH"/>
    <property type="match status" value="1"/>
</dbReference>
<dbReference type="SUPFAM" id="SSF57716">
    <property type="entry name" value="Glucocorticoid receptor-like (DNA-binding domain)"/>
    <property type="match status" value="1"/>
</dbReference>
<dbReference type="SUPFAM" id="SSF81624">
    <property type="entry name" value="N-terminal domain of MutM-like DNA repair proteins"/>
    <property type="match status" value="1"/>
</dbReference>
<dbReference type="SUPFAM" id="SSF46946">
    <property type="entry name" value="S13-like H2TH domain"/>
    <property type="match status" value="1"/>
</dbReference>
<dbReference type="PROSITE" id="PS51068">
    <property type="entry name" value="FPG_CAT"/>
    <property type="match status" value="1"/>
</dbReference>
<dbReference type="PROSITE" id="PS01242">
    <property type="entry name" value="ZF_FPG_1"/>
    <property type="match status" value="1"/>
</dbReference>
<dbReference type="PROSITE" id="PS51066">
    <property type="entry name" value="ZF_FPG_2"/>
    <property type="match status" value="1"/>
</dbReference>
<sequence>MPELPEVETTLRGIAPHVTGRRVTAVTARAAKLRLPIPPELGERLTGRVIERVERRAKYLLLRCGDGTAIIHLGMTGTLRVAPAGSPPGKYDHLDLVLDDGRTLRFRDPRKFGLVLWTGSDPLAHPLLAQLGPEPFPPLFNGSYLFSRSRKRNAAIKLLLMDNRIVVGVGNIYANEALFRARIHPERAAGSLSEEDCATLATAVGDVLRDAIAEGDTTLHEFIATEVPSGYFRINPAVYGQTGKPCTVCGTPIARIRLGNRSTWFCPVCQK</sequence>
<name>FPG_GEOSL</name>
<organism>
    <name type="scientific">Geobacter sulfurreducens (strain ATCC 51573 / DSM 12127 / PCA)</name>
    <dbReference type="NCBI Taxonomy" id="243231"/>
    <lineage>
        <taxon>Bacteria</taxon>
        <taxon>Pseudomonadati</taxon>
        <taxon>Thermodesulfobacteriota</taxon>
        <taxon>Desulfuromonadia</taxon>
        <taxon>Geobacterales</taxon>
        <taxon>Geobacteraceae</taxon>
        <taxon>Geobacter</taxon>
    </lineage>
</organism>
<comment type="function">
    <text evidence="2">Involved in base excision repair of DNA damaged by oxidation or by mutagenic agents. Acts as a DNA glycosylase that recognizes and removes damaged bases. Has a preference for oxidized purines, such as 7,8-dihydro-8-oxoguanine (8-oxoG). Has AP (apurinic/apyrimidinic) lyase activity and introduces nicks in the DNA strand. Cleaves the DNA backbone by beta-delta elimination to generate a single-strand break at the site of the removed base with both 3'- and 5'-phosphates.</text>
</comment>
<comment type="catalytic activity">
    <reaction evidence="2">
        <text>Hydrolysis of DNA containing ring-opened 7-methylguanine residues, releasing 2,6-diamino-4-hydroxy-5-(N-methyl)formamidopyrimidine.</text>
        <dbReference type="EC" id="3.2.2.23"/>
    </reaction>
</comment>
<comment type="catalytic activity">
    <reaction evidence="2">
        <text>2'-deoxyribonucleotide-(2'-deoxyribose 5'-phosphate)-2'-deoxyribonucleotide-DNA = a 3'-end 2'-deoxyribonucleotide-(2,3-dehydro-2,3-deoxyribose 5'-phosphate)-DNA + a 5'-end 5'-phospho-2'-deoxyribonucleoside-DNA + H(+)</text>
        <dbReference type="Rhea" id="RHEA:66592"/>
        <dbReference type="Rhea" id="RHEA-COMP:13180"/>
        <dbReference type="Rhea" id="RHEA-COMP:16897"/>
        <dbReference type="Rhea" id="RHEA-COMP:17067"/>
        <dbReference type="ChEBI" id="CHEBI:15378"/>
        <dbReference type="ChEBI" id="CHEBI:136412"/>
        <dbReference type="ChEBI" id="CHEBI:157695"/>
        <dbReference type="ChEBI" id="CHEBI:167181"/>
        <dbReference type="EC" id="4.2.99.18"/>
    </reaction>
</comment>
<comment type="cofactor">
    <cofactor evidence="2">
        <name>Zn(2+)</name>
        <dbReference type="ChEBI" id="CHEBI:29105"/>
    </cofactor>
    <text evidence="2">Binds 1 zinc ion per subunit.</text>
</comment>
<comment type="subunit">
    <text evidence="2">Monomer.</text>
</comment>
<comment type="similarity">
    <text evidence="2">Belongs to the FPG family.</text>
</comment>
<reference key="1">
    <citation type="journal article" date="2003" name="Science">
        <title>Genome of Geobacter sulfurreducens: metal reduction in subsurface environments.</title>
        <authorList>
            <person name="Methe B.A."/>
            <person name="Nelson K.E."/>
            <person name="Eisen J.A."/>
            <person name="Paulsen I.T."/>
            <person name="Nelson W.C."/>
            <person name="Heidelberg J.F."/>
            <person name="Wu D."/>
            <person name="Wu M."/>
            <person name="Ward N.L."/>
            <person name="Beanan M.J."/>
            <person name="Dodson R.J."/>
            <person name="Madupu R."/>
            <person name="Brinkac L.M."/>
            <person name="Daugherty S.C."/>
            <person name="DeBoy R.T."/>
            <person name="Durkin A.S."/>
            <person name="Gwinn M.L."/>
            <person name="Kolonay J.F."/>
            <person name="Sullivan S.A."/>
            <person name="Haft D.H."/>
            <person name="Selengut J."/>
            <person name="Davidsen T.M."/>
            <person name="Zafar N."/>
            <person name="White O."/>
            <person name="Tran B."/>
            <person name="Romero C."/>
            <person name="Forberger H.A."/>
            <person name="Weidman J.F."/>
            <person name="Khouri H.M."/>
            <person name="Feldblyum T.V."/>
            <person name="Utterback T.R."/>
            <person name="Van Aken S.E."/>
            <person name="Lovley D.R."/>
            <person name="Fraser C.M."/>
        </authorList>
    </citation>
    <scope>NUCLEOTIDE SEQUENCE [LARGE SCALE GENOMIC DNA]</scope>
    <source>
        <strain>ATCC 51573 / DSM 12127 / PCA</strain>
    </source>
</reference>
<gene>
    <name evidence="2" type="primary">mutM</name>
    <name evidence="2" type="synonym">fpg</name>
    <name type="ordered locus">GSU0997</name>
</gene>
<keyword id="KW-0227">DNA damage</keyword>
<keyword id="KW-0234">DNA repair</keyword>
<keyword id="KW-0238">DNA-binding</keyword>
<keyword id="KW-0326">Glycosidase</keyword>
<keyword id="KW-0378">Hydrolase</keyword>
<keyword id="KW-0456">Lyase</keyword>
<keyword id="KW-0479">Metal-binding</keyword>
<keyword id="KW-0511">Multifunctional enzyme</keyword>
<keyword id="KW-1185">Reference proteome</keyword>
<keyword id="KW-0862">Zinc</keyword>
<keyword id="KW-0863">Zinc-finger</keyword>
<accession>Q74EG5</accession>
<evidence type="ECO:0000250" key="1"/>
<evidence type="ECO:0000255" key="2">
    <source>
        <dbReference type="HAMAP-Rule" id="MF_00103"/>
    </source>
</evidence>